<gene>
    <name type="primary">SRY</name>
    <name type="synonym">TDF</name>
</gene>
<comment type="function">
    <text evidence="1 2">Transcriptional regulator that controls a genetic switch in male development. It is necessary and sufficient for initiating male sex determination by directing the development of supporting cell precursors (pre-Sertoli cells) as Sertoli rather than granulosa cells. Involved in different aspects of gene regulation including promoter activation or repression. Binds to the DNA consensus sequence 5'-[AT]AACAA[AT]-3'. SRY HMG box recognizes DNA by partial intercalation in the minor groove and promotes DNA bending. Also involved in pre-mRNA splicing (By similarity). In male adult brain involved in the maintenance of motor functions of dopaminergic neurons (By similarity).</text>
</comment>
<comment type="subunit">
    <text evidence="2">Interacts with CALM, EP300, HDAC3, KPNB1, ZNF208 isoform KRAB-O, PARP1, SLC9A3R2 and WT1. The interaction with EP300 modulates its DNA-binding activity. The interaction with KPNB1 is sensitive to dissociation by Ran in the GTP-bound form. Interaction with PARP1 impaired its DNA-binding activity.</text>
</comment>
<comment type="subcellular location">
    <subcellularLocation>
        <location evidence="2">Nucleus speckle</location>
    </subcellularLocation>
    <subcellularLocation>
        <location evidence="2">Cytoplasm</location>
    </subcellularLocation>
    <subcellularLocation>
        <location evidence="2">Nucleus</location>
    </subcellularLocation>
</comment>
<comment type="PTM">
    <text evidence="2">Acetylation of Lys-130 contributes to its nuclear localization and enhances its interaction with KPNB1. Deacetylated by HDAC3.</text>
</comment>
<comment type="similarity">
    <text evidence="5">Belongs to the SRY family.</text>
</comment>
<comment type="online information" name="Protein Spotlight">
    <link uri="https://www.proteinspotlight.org/back_issues/080"/>
    <text>The tenuous nature of sex - Issue 80 of March 2007</text>
</comment>
<feature type="chain" id="PRO_0000048642" description="Sex-determining region Y protein">
    <location>
        <begin position="1"/>
        <end position="229"/>
    </location>
</feature>
<feature type="DNA-binding region" description="HMG box" evidence="3">
    <location>
        <begin position="54"/>
        <end position="122"/>
    </location>
</feature>
<feature type="region of interest" description="Disordered" evidence="4">
    <location>
        <begin position="32"/>
        <end position="52"/>
    </location>
</feature>
<feature type="compositionally biased region" description="Basic and acidic residues" evidence="4">
    <location>
        <begin position="39"/>
        <end position="52"/>
    </location>
</feature>
<dbReference type="EMBL" id="AY079141">
    <property type="protein sequence ID" value="AAL86542.1"/>
    <property type="molecule type" value="Genomic_DNA"/>
</dbReference>
<dbReference type="SMR" id="Q8SPQ2"/>
<dbReference type="GO" id="GO:0005737">
    <property type="term" value="C:cytoplasm"/>
    <property type="evidence" value="ECO:0007669"/>
    <property type="project" value="UniProtKB-SubCell"/>
</dbReference>
<dbReference type="GO" id="GO:0016607">
    <property type="term" value="C:nuclear speck"/>
    <property type="evidence" value="ECO:0007669"/>
    <property type="project" value="UniProtKB-SubCell"/>
</dbReference>
<dbReference type="GO" id="GO:0005634">
    <property type="term" value="C:nucleus"/>
    <property type="evidence" value="ECO:0000250"/>
    <property type="project" value="UniProtKB"/>
</dbReference>
<dbReference type="GO" id="GO:0005516">
    <property type="term" value="F:calmodulin binding"/>
    <property type="evidence" value="ECO:0007669"/>
    <property type="project" value="UniProtKB-KW"/>
</dbReference>
<dbReference type="GO" id="GO:0001228">
    <property type="term" value="F:DNA-binding transcription activator activity, RNA polymerase II-specific"/>
    <property type="evidence" value="ECO:0007669"/>
    <property type="project" value="TreeGrafter"/>
</dbReference>
<dbReference type="GO" id="GO:0000978">
    <property type="term" value="F:RNA polymerase II cis-regulatory region sequence-specific DNA binding"/>
    <property type="evidence" value="ECO:0007669"/>
    <property type="project" value="TreeGrafter"/>
</dbReference>
<dbReference type="GO" id="GO:0030154">
    <property type="term" value="P:cell differentiation"/>
    <property type="evidence" value="ECO:0007669"/>
    <property type="project" value="UniProtKB-KW"/>
</dbReference>
<dbReference type="GO" id="GO:0030238">
    <property type="term" value="P:male sex determination"/>
    <property type="evidence" value="ECO:0007669"/>
    <property type="project" value="InterPro"/>
</dbReference>
<dbReference type="GO" id="GO:0007548">
    <property type="term" value="P:sex differentiation"/>
    <property type="evidence" value="ECO:0007669"/>
    <property type="project" value="UniProtKB-KW"/>
</dbReference>
<dbReference type="CDD" id="cd22034">
    <property type="entry name" value="HMG-box_SoxA_SRY"/>
    <property type="match status" value="1"/>
</dbReference>
<dbReference type="FunFam" id="1.10.30.10:FF:000002">
    <property type="entry name" value="transcription factor Sox-2"/>
    <property type="match status" value="1"/>
</dbReference>
<dbReference type="Gene3D" id="1.10.30.10">
    <property type="entry name" value="High mobility group box domain"/>
    <property type="match status" value="1"/>
</dbReference>
<dbReference type="InterPro" id="IPR009071">
    <property type="entry name" value="HMG_box_dom"/>
</dbReference>
<dbReference type="InterPro" id="IPR036910">
    <property type="entry name" value="HMG_box_dom_sf"/>
</dbReference>
<dbReference type="InterPro" id="IPR017253">
    <property type="entry name" value="SRY"/>
</dbReference>
<dbReference type="InterPro" id="IPR050140">
    <property type="entry name" value="SRY-related_HMG-box_TF-like"/>
</dbReference>
<dbReference type="PANTHER" id="PTHR10270:SF161">
    <property type="entry name" value="SEX-DETERMINING REGION Y PROTEIN"/>
    <property type="match status" value="1"/>
</dbReference>
<dbReference type="PANTHER" id="PTHR10270">
    <property type="entry name" value="SOX TRANSCRIPTION FACTOR"/>
    <property type="match status" value="1"/>
</dbReference>
<dbReference type="Pfam" id="PF00505">
    <property type="entry name" value="HMG_box"/>
    <property type="match status" value="1"/>
</dbReference>
<dbReference type="PIRSF" id="PIRSF037653">
    <property type="entry name" value="SRY"/>
    <property type="match status" value="1"/>
</dbReference>
<dbReference type="SMART" id="SM00398">
    <property type="entry name" value="HMG"/>
    <property type="match status" value="1"/>
</dbReference>
<dbReference type="SUPFAM" id="SSF47095">
    <property type="entry name" value="HMG-box"/>
    <property type="match status" value="1"/>
</dbReference>
<dbReference type="PROSITE" id="PS50118">
    <property type="entry name" value="HMG_BOX_2"/>
    <property type="match status" value="1"/>
</dbReference>
<proteinExistence type="inferred from homology"/>
<evidence type="ECO:0000250" key="1">
    <source>
        <dbReference type="UniProtKB" id="P36394"/>
    </source>
</evidence>
<evidence type="ECO:0000250" key="2">
    <source>
        <dbReference type="UniProtKB" id="Q05066"/>
    </source>
</evidence>
<evidence type="ECO:0000255" key="3">
    <source>
        <dbReference type="PROSITE-ProRule" id="PRU00267"/>
    </source>
</evidence>
<evidence type="ECO:0000256" key="4">
    <source>
        <dbReference type="SAM" id="MobiDB-lite"/>
    </source>
</evidence>
<evidence type="ECO:0000305" key="5"/>
<organism>
    <name type="scientific">Bison bison</name>
    <name type="common">American bison</name>
    <name type="synonym">Bos bison</name>
    <dbReference type="NCBI Taxonomy" id="9901"/>
    <lineage>
        <taxon>Eukaryota</taxon>
        <taxon>Metazoa</taxon>
        <taxon>Chordata</taxon>
        <taxon>Craniata</taxon>
        <taxon>Vertebrata</taxon>
        <taxon>Euteleostomi</taxon>
        <taxon>Mammalia</taxon>
        <taxon>Eutheria</taxon>
        <taxon>Laurasiatheria</taxon>
        <taxon>Artiodactyla</taxon>
        <taxon>Ruminantia</taxon>
        <taxon>Pecora</taxon>
        <taxon>Bovidae</taxon>
        <taxon>Bovinae</taxon>
        <taxon>Bison</taxon>
    </lineage>
</organism>
<keyword id="KW-0007">Acetylation</keyword>
<keyword id="KW-0010">Activator</keyword>
<keyword id="KW-0112">Calmodulin-binding</keyword>
<keyword id="KW-0963">Cytoplasm</keyword>
<keyword id="KW-0221">Differentiation</keyword>
<keyword id="KW-0238">DNA-binding</keyword>
<keyword id="KW-0539">Nucleus</keyword>
<keyword id="KW-0678">Repressor</keyword>
<keyword id="KW-0726">Sexual differentiation</keyword>
<keyword id="KW-0804">Transcription</keyword>
<keyword id="KW-0805">Transcription regulation</keyword>
<protein>
    <recommendedName>
        <fullName>Sex-determining region Y protein</fullName>
    </recommendedName>
    <alternativeName>
        <fullName>Testis-determining factor</fullName>
    </alternativeName>
</protein>
<reference key="1">
    <citation type="journal article" date="2004" name="Mol. Biol. Evol.">
        <title>Maternal and paternal lineages in cross-breeding bovine species. Has wisent a hybrid origin?</title>
        <authorList>
            <person name="Verkaar E.L.C."/>
            <person name="Nijman I.J."/>
            <person name="Beeke M."/>
            <person name="Hanekamp E."/>
            <person name="Lenstra J.A."/>
        </authorList>
    </citation>
    <scope>NUCLEOTIDE SEQUENCE [GENOMIC DNA]</scope>
</reference>
<accession>Q8SPQ2</accession>
<sequence length="229" mass="26687">MFRVLNDDVYSPAVVQQQTTLSFRKDSSLCTDSHSANDQCERGEHVRESSQDHVKRPMNAFIVWSRERRRKVALENPKMKNSDISKQLGYEWKRLTDAEKRPFFEEAQRLLAIHRDKYPGYKYRPRRRAKRPQKSLPADSSILCNPMHVETLHPFTYRDGCAKTTYSQMESQLSRSQSVIITNSLLQKEHHSSWTSLGHNKVTLATRISADFPFNKSLEPGLSCAYFQY</sequence>
<name>SRY_BISBI</name>